<name>PUR9_ACET2</name>
<protein>
    <recommendedName>
        <fullName evidence="1">Bifunctional purine biosynthesis protein PurH</fullName>
    </recommendedName>
    <domain>
        <recommendedName>
            <fullName evidence="1">Phosphoribosylaminoimidazolecarboxamide formyltransferase</fullName>
            <ecNumber evidence="1">2.1.2.3</ecNumber>
        </recommendedName>
        <alternativeName>
            <fullName evidence="1">AICAR transformylase</fullName>
        </alternativeName>
    </domain>
    <domain>
        <recommendedName>
            <fullName evidence="1">IMP cyclohydrolase</fullName>
            <ecNumber evidence="1">3.5.4.10</ecNumber>
        </recommendedName>
        <alternativeName>
            <fullName evidence="1">ATIC</fullName>
        </alternativeName>
        <alternativeName>
            <fullName evidence="1">IMP synthase</fullName>
        </alternativeName>
        <alternativeName>
            <fullName evidence="1">Inosinicase</fullName>
        </alternativeName>
    </domain>
</protein>
<keyword id="KW-0378">Hydrolase</keyword>
<keyword id="KW-0511">Multifunctional enzyme</keyword>
<keyword id="KW-0658">Purine biosynthesis</keyword>
<keyword id="KW-1185">Reference proteome</keyword>
<keyword id="KW-0808">Transferase</keyword>
<organism>
    <name type="scientific">Acetivibrio thermocellus (strain ATCC 27405 / DSM 1237 / JCM 9322 / NBRC 103400 / NCIMB 10682 / NRRL B-4536 / VPI 7372)</name>
    <name type="common">Clostridium thermocellum</name>
    <dbReference type="NCBI Taxonomy" id="203119"/>
    <lineage>
        <taxon>Bacteria</taxon>
        <taxon>Bacillati</taxon>
        <taxon>Bacillota</taxon>
        <taxon>Clostridia</taxon>
        <taxon>Eubacteriales</taxon>
        <taxon>Oscillospiraceae</taxon>
        <taxon>Acetivibrio</taxon>
    </lineage>
</organism>
<proteinExistence type="inferred from homology"/>
<reference key="1">
    <citation type="submission" date="2007-02" db="EMBL/GenBank/DDBJ databases">
        <title>Complete sequence of Clostridium thermocellum ATCC 27405.</title>
        <authorList>
            <consortium name="US DOE Joint Genome Institute"/>
            <person name="Copeland A."/>
            <person name="Lucas S."/>
            <person name="Lapidus A."/>
            <person name="Barry K."/>
            <person name="Detter J.C."/>
            <person name="Glavina del Rio T."/>
            <person name="Hammon N."/>
            <person name="Israni S."/>
            <person name="Dalin E."/>
            <person name="Tice H."/>
            <person name="Pitluck S."/>
            <person name="Chertkov O."/>
            <person name="Brettin T."/>
            <person name="Bruce D."/>
            <person name="Han C."/>
            <person name="Tapia R."/>
            <person name="Gilna P."/>
            <person name="Schmutz J."/>
            <person name="Larimer F."/>
            <person name="Land M."/>
            <person name="Hauser L."/>
            <person name="Kyrpides N."/>
            <person name="Mikhailova N."/>
            <person name="Wu J.H.D."/>
            <person name="Newcomb M."/>
            <person name="Richardson P."/>
        </authorList>
    </citation>
    <scope>NUCLEOTIDE SEQUENCE [LARGE SCALE GENOMIC DNA]</scope>
    <source>
        <strain>ATCC 27405 / DSM 1237 / JCM 9322 / NBRC 103400 / NCIMB 10682 / NRRL B-4536 / VPI 7372</strain>
    </source>
</reference>
<sequence length="514" mass="56342">MIKRALISVSDKTGIVEMARELQSMGVDIISTGGTAKTLSDAGIKVINISDVTGFPECLDGRVKTLHPKVHAGILAIRSNEEHMRQLKELNIETIDMVIINLYPFKQTILKENVDLSEAIENIDIGGPTMIRAAAKNYQDVVVIVDPSDYAAVLEELKTTKDVSLKTKFKLAYKVFEHTSHYDTLIAKYLREQIGEDEFPQTLSLTFEKVQDMRYGENPHQKAVFYKEVGANVGCITAAKQLHGKELSYNNINDANGAIEIIKEFDEPTVVAVKHANPCGVASASNIYDAYIKAYEADPVSIFGGIIAANREIDEKTAEEINKIFVEIVIAPSFTEGALKILTQKKNIRLLQLEDISAKIPKGTYDMKKVPGGLLVQNYNSELLNMDDLKVVTEKKPTQEELEDLIFAMKVVKHTKSNGIALAKGKQTIGVGPGQTNRVTACKIAIEYGGERTKGAVLASDAFFPFADCVEAAAAAGITAIIQPGGSIRDQESIDACNKYGIAMVFTGMRHFKH</sequence>
<evidence type="ECO:0000255" key="1">
    <source>
        <dbReference type="HAMAP-Rule" id="MF_00139"/>
    </source>
</evidence>
<evidence type="ECO:0000255" key="2">
    <source>
        <dbReference type="PROSITE-ProRule" id="PRU01202"/>
    </source>
</evidence>
<gene>
    <name evidence="1" type="primary">purH</name>
    <name type="ordered locus">Cthe_1246</name>
</gene>
<feature type="chain" id="PRO_1000018882" description="Bifunctional purine biosynthesis protein PurH">
    <location>
        <begin position="1"/>
        <end position="514"/>
    </location>
</feature>
<feature type="domain" description="MGS-like" evidence="2">
    <location>
        <begin position="1"/>
        <end position="145"/>
    </location>
</feature>
<comment type="catalytic activity">
    <reaction evidence="1">
        <text>(6R)-10-formyltetrahydrofolate + 5-amino-1-(5-phospho-beta-D-ribosyl)imidazole-4-carboxamide = 5-formamido-1-(5-phospho-D-ribosyl)imidazole-4-carboxamide + (6S)-5,6,7,8-tetrahydrofolate</text>
        <dbReference type="Rhea" id="RHEA:22192"/>
        <dbReference type="ChEBI" id="CHEBI:57453"/>
        <dbReference type="ChEBI" id="CHEBI:58467"/>
        <dbReference type="ChEBI" id="CHEBI:58475"/>
        <dbReference type="ChEBI" id="CHEBI:195366"/>
        <dbReference type="EC" id="2.1.2.3"/>
    </reaction>
</comment>
<comment type="catalytic activity">
    <reaction evidence="1">
        <text>IMP + H2O = 5-formamido-1-(5-phospho-D-ribosyl)imidazole-4-carboxamide</text>
        <dbReference type="Rhea" id="RHEA:18445"/>
        <dbReference type="ChEBI" id="CHEBI:15377"/>
        <dbReference type="ChEBI" id="CHEBI:58053"/>
        <dbReference type="ChEBI" id="CHEBI:58467"/>
        <dbReference type="EC" id="3.5.4.10"/>
    </reaction>
</comment>
<comment type="pathway">
    <text evidence="1">Purine metabolism; IMP biosynthesis via de novo pathway; 5-formamido-1-(5-phospho-D-ribosyl)imidazole-4-carboxamide from 5-amino-1-(5-phospho-D-ribosyl)imidazole-4-carboxamide (10-formyl THF route): step 1/1.</text>
</comment>
<comment type="pathway">
    <text evidence="1">Purine metabolism; IMP biosynthesis via de novo pathway; IMP from 5-formamido-1-(5-phospho-D-ribosyl)imidazole-4-carboxamide: step 1/1.</text>
</comment>
<comment type="domain">
    <text evidence="1">The IMP cyclohydrolase activity resides in the N-terminal region.</text>
</comment>
<comment type="similarity">
    <text evidence="1">Belongs to the PurH family.</text>
</comment>
<accession>A3DEU9</accession>
<dbReference type="EC" id="2.1.2.3" evidence="1"/>
<dbReference type="EC" id="3.5.4.10" evidence="1"/>
<dbReference type="EMBL" id="CP000568">
    <property type="protein sequence ID" value="ABN52478.1"/>
    <property type="molecule type" value="Genomic_DNA"/>
</dbReference>
<dbReference type="RefSeq" id="WP_004463626.1">
    <property type="nucleotide sequence ID" value="NC_009012.1"/>
</dbReference>
<dbReference type="SMR" id="A3DEU9"/>
<dbReference type="STRING" id="203119.Cthe_1246"/>
<dbReference type="GeneID" id="35805767"/>
<dbReference type="KEGG" id="cth:Cthe_1246"/>
<dbReference type="eggNOG" id="COG0138">
    <property type="taxonomic scope" value="Bacteria"/>
</dbReference>
<dbReference type="HOGENOM" id="CLU_016316_5_2_9"/>
<dbReference type="OrthoDB" id="9802065at2"/>
<dbReference type="UniPathway" id="UPA00074">
    <property type="reaction ID" value="UER00133"/>
</dbReference>
<dbReference type="UniPathway" id="UPA00074">
    <property type="reaction ID" value="UER00135"/>
</dbReference>
<dbReference type="Proteomes" id="UP000002145">
    <property type="component" value="Chromosome"/>
</dbReference>
<dbReference type="GO" id="GO:0005829">
    <property type="term" value="C:cytosol"/>
    <property type="evidence" value="ECO:0007669"/>
    <property type="project" value="TreeGrafter"/>
</dbReference>
<dbReference type="GO" id="GO:0003937">
    <property type="term" value="F:IMP cyclohydrolase activity"/>
    <property type="evidence" value="ECO:0007669"/>
    <property type="project" value="UniProtKB-UniRule"/>
</dbReference>
<dbReference type="GO" id="GO:0004643">
    <property type="term" value="F:phosphoribosylaminoimidazolecarboxamide formyltransferase activity"/>
    <property type="evidence" value="ECO:0007669"/>
    <property type="project" value="UniProtKB-UniRule"/>
</dbReference>
<dbReference type="GO" id="GO:0006189">
    <property type="term" value="P:'de novo' IMP biosynthetic process"/>
    <property type="evidence" value="ECO:0007669"/>
    <property type="project" value="UniProtKB-UniRule"/>
</dbReference>
<dbReference type="CDD" id="cd01421">
    <property type="entry name" value="IMPCH"/>
    <property type="match status" value="1"/>
</dbReference>
<dbReference type="FunFam" id="3.40.140.20:FF:000001">
    <property type="entry name" value="Bifunctional purine biosynthesis protein PurH"/>
    <property type="match status" value="1"/>
</dbReference>
<dbReference type="FunFam" id="3.40.140.20:FF:000002">
    <property type="entry name" value="Bifunctional purine biosynthesis protein PurH"/>
    <property type="match status" value="1"/>
</dbReference>
<dbReference type="FunFam" id="3.40.50.1380:FF:000001">
    <property type="entry name" value="Bifunctional purine biosynthesis protein PurH"/>
    <property type="match status" value="1"/>
</dbReference>
<dbReference type="Gene3D" id="3.40.140.20">
    <property type="match status" value="2"/>
</dbReference>
<dbReference type="Gene3D" id="3.40.50.1380">
    <property type="entry name" value="Methylglyoxal synthase-like domain"/>
    <property type="match status" value="1"/>
</dbReference>
<dbReference type="HAMAP" id="MF_00139">
    <property type="entry name" value="PurH"/>
    <property type="match status" value="1"/>
</dbReference>
<dbReference type="InterPro" id="IPR024051">
    <property type="entry name" value="AICAR_Tfase_dup_dom_sf"/>
</dbReference>
<dbReference type="InterPro" id="IPR016193">
    <property type="entry name" value="Cytidine_deaminase-like"/>
</dbReference>
<dbReference type="InterPro" id="IPR011607">
    <property type="entry name" value="MGS-like_dom"/>
</dbReference>
<dbReference type="InterPro" id="IPR036914">
    <property type="entry name" value="MGS-like_dom_sf"/>
</dbReference>
<dbReference type="InterPro" id="IPR002695">
    <property type="entry name" value="PurH-like"/>
</dbReference>
<dbReference type="NCBIfam" id="NF002049">
    <property type="entry name" value="PRK00881.1"/>
    <property type="match status" value="1"/>
</dbReference>
<dbReference type="NCBIfam" id="TIGR00355">
    <property type="entry name" value="purH"/>
    <property type="match status" value="1"/>
</dbReference>
<dbReference type="PANTHER" id="PTHR11692:SF0">
    <property type="entry name" value="BIFUNCTIONAL PURINE BIOSYNTHESIS PROTEIN ATIC"/>
    <property type="match status" value="1"/>
</dbReference>
<dbReference type="PANTHER" id="PTHR11692">
    <property type="entry name" value="BIFUNCTIONAL PURINE BIOSYNTHESIS PROTEIN PURH"/>
    <property type="match status" value="1"/>
</dbReference>
<dbReference type="Pfam" id="PF01808">
    <property type="entry name" value="AICARFT_IMPCHas"/>
    <property type="match status" value="1"/>
</dbReference>
<dbReference type="Pfam" id="PF02142">
    <property type="entry name" value="MGS"/>
    <property type="match status" value="1"/>
</dbReference>
<dbReference type="PIRSF" id="PIRSF000414">
    <property type="entry name" value="AICARFT_IMPCHas"/>
    <property type="match status" value="1"/>
</dbReference>
<dbReference type="SMART" id="SM00798">
    <property type="entry name" value="AICARFT_IMPCHas"/>
    <property type="match status" value="1"/>
</dbReference>
<dbReference type="SMART" id="SM00851">
    <property type="entry name" value="MGS"/>
    <property type="match status" value="1"/>
</dbReference>
<dbReference type="SUPFAM" id="SSF53927">
    <property type="entry name" value="Cytidine deaminase-like"/>
    <property type="match status" value="1"/>
</dbReference>
<dbReference type="SUPFAM" id="SSF52335">
    <property type="entry name" value="Methylglyoxal synthase-like"/>
    <property type="match status" value="1"/>
</dbReference>
<dbReference type="PROSITE" id="PS51855">
    <property type="entry name" value="MGS"/>
    <property type="match status" value="1"/>
</dbReference>